<feature type="chain" id="PRO_0000071113" description="Mitochondrial import inner membrane translocase subunit TIM14">
    <location>
        <begin position="1"/>
        <end position="105"/>
    </location>
</feature>
<feature type="topological domain" description="Mitochondrial intermembrane" evidence="2">
    <location>
        <begin position="1"/>
        <end position="3"/>
    </location>
</feature>
<feature type="transmembrane region" description="Helical" evidence="2">
    <location>
        <begin position="4"/>
        <end position="23"/>
    </location>
</feature>
<feature type="topological domain" description="Mitochondrial matrix" evidence="2">
    <location>
        <begin position="24"/>
        <end position="105"/>
    </location>
</feature>
<feature type="domain" description="J">
    <location>
        <begin position="52"/>
        <end position="105"/>
    </location>
</feature>
<name>TIM14_GIBZE</name>
<dbReference type="EMBL" id="DS231666">
    <property type="protein sequence ID" value="ESU12853.1"/>
    <property type="molecule type" value="Genomic_DNA"/>
</dbReference>
<dbReference type="EMBL" id="HG970335">
    <property type="protein sequence ID" value="CEF84665.1"/>
    <property type="molecule type" value="Genomic_DNA"/>
</dbReference>
<dbReference type="RefSeq" id="XP_011326360.1">
    <property type="nucleotide sequence ID" value="XM_011328058.1"/>
</dbReference>
<dbReference type="SMR" id="Q4I7T5"/>
<dbReference type="STRING" id="229533.Q4I7T5"/>
<dbReference type="GeneID" id="23553842"/>
<dbReference type="KEGG" id="fgr:FGSG_06723"/>
<dbReference type="VEuPathDB" id="FungiDB:FGRAMPH1_01G23005"/>
<dbReference type="eggNOG" id="KOG0723">
    <property type="taxonomic scope" value="Eukaryota"/>
</dbReference>
<dbReference type="HOGENOM" id="CLU_017633_13_3_1"/>
<dbReference type="InParanoid" id="Q4I7T5"/>
<dbReference type="OrthoDB" id="117317at110618"/>
<dbReference type="Proteomes" id="UP000070720">
    <property type="component" value="Chromosome 4"/>
</dbReference>
<dbReference type="GO" id="GO:0001405">
    <property type="term" value="C:PAM complex, Tim23 associated import motor"/>
    <property type="evidence" value="ECO:0007669"/>
    <property type="project" value="TreeGrafter"/>
</dbReference>
<dbReference type="GO" id="GO:0001671">
    <property type="term" value="F:ATPase activator activity"/>
    <property type="evidence" value="ECO:0007669"/>
    <property type="project" value="TreeGrafter"/>
</dbReference>
<dbReference type="GO" id="GO:0030150">
    <property type="term" value="P:protein import into mitochondrial matrix"/>
    <property type="evidence" value="ECO:0007669"/>
    <property type="project" value="TreeGrafter"/>
</dbReference>
<dbReference type="CDD" id="cd06257">
    <property type="entry name" value="DnaJ"/>
    <property type="match status" value="1"/>
</dbReference>
<dbReference type="FunFam" id="1.10.287.110:FF:000001">
    <property type="entry name" value="Import inner membrane translocase subunit tim14"/>
    <property type="match status" value="1"/>
</dbReference>
<dbReference type="Gene3D" id="1.10.287.110">
    <property type="entry name" value="DnaJ domain"/>
    <property type="match status" value="1"/>
</dbReference>
<dbReference type="InterPro" id="IPR001623">
    <property type="entry name" value="DnaJ_domain"/>
</dbReference>
<dbReference type="InterPro" id="IPR036869">
    <property type="entry name" value="J_dom_sf"/>
</dbReference>
<dbReference type="PANTHER" id="PTHR12763">
    <property type="match status" value="1"/>
</dbReference>
<dbReference type="PANTHER" id="PTHR12763:SF28">
    <property type="entry name" value="GEO10507P1-RELATED"/>
    <property type="match status" value="1"/>
</dbReference>
<dbReference type="SUPFAM" id="SSF46565">
    <property type="entry name" value="Chaperone J-domain"/>
    <property type="match status" value="1"/>
</dbReference>
<accession>Q4I7T5</accession>
<accession>A0A0E0SE02</accession>
<accession>V6RE08</accession>
<sequence length="105" mass="11293">MASVMAWGAGAAVAAFLGRAGLVAWRRSRGGVGAMGKAFYKGGFEAKMTKKEATLILSLNERAITKDKVRKAHRTLMLLNHPDRGGSPYLATKVNEAKEFLDKNG</sequence>
<reference key="1">
    <citation type="journal article" date="2007" name="Science">
        <title>The Fusarium graminearum genome reveals a link between localized polymorphism and pathogen specialization.</title>
        <authorList>
            <person name="Cuomo C.A."/>
            <person name="Gueldener U."/>
            <person name="Xu J.-R."/>
            <person name="Trail F."/>
            <person name="Turgeon B.G."/>
            <person name="Di Pietro A."/>
            <person name="Walton J.D."/>
            <person name="Ma L.-J."/>
            <person name="Baker S.E."/>
            <person name="Rep M."/>
            <person name="Adam G."/>
            <person name="Antoniw J."/>
            <person name="Baldwin T."/>
            <person name="Calvo S.E."/>
            <person name="Chang Y.-L."/>
            <person name="DeCaprio D."/>
            <person name="Gale L.R."/>
            <person name="Gnerre S."/>
            <person name="Goswami R.S."/>
            <person name="Hammond-Kosack K."/>
            <person name="Harris L.J."/>
            <person name="Hilburn K."/>
            <person name="Kennell J.C."/>
            <person name="Kroken S."/>
            <person name="Magnuson J.K."/>
            <person name="Mannhaupt G."/>
            <person name="Mauceli E.W."/>
            <person name="Mewes H.-W."/>
            <person name="Mitterbauer R."/>
            <person name="Muehlbauer G."/>
            <person name="Muensterkoetter M."/>
            <person name="Nelson D."/>
            <person name="O'Donnell K."/>
            <person name="Ouellet T."/>
            <person name="Qi W."/>
            <person name="Quesneville H."/>
            <person name="Roncero M.I.G."/>
            <person name="Seong K.-Y."/>
            <person name="Tetko I.V."/>
            <person name="Urban M."/>
            <person name="Waalwijk C."/>
            <person name="Ward T.J."/>
            <person name="Yao J."/>
            <person name="Birren B.W."/>
            <person name="Kistler H.C."/>
        </authorList>
    </citation>
    <scope>NUCLEOTIDE SEQUENCE [LARGE SCALE GENOMIC DNA]</scope>
    <source>
        <strain>ATCC MYA-4620 / CBS 123657 / FGSC 9075 / NRRL 31084 / PH-1</strain>
    </source>
</reference>
<reference key="2">
    <citation type="journal article" date="2010" name="Nature">
        <title>Comparative genomics reveals mobile pathogenicity chromosomes in Fusarium.</title>
        <authorList>
            <person name="Ma L.-J."/>
            <person name="van der Does H.C."/>
            <person name="Borkovich K.A."/>
            <person name="Coleman J.J."/>
            <person name="Daboussi M.-J."/>
            <person name="Di Pietro A."/>
            <person name="Dufresne M."/>
            <person name="Freitag M."/>
            <person name="Grabherr M."/>
            <person name="Henrissat B."/>
            <person name="Houterman P.M."/>
            <person name="Kang S."/>
            <person name="Shim W.-B."/>
            <person name="Woloshuk C."/>
            <person name="Xie X."/>
            <person name="Xu J.-R."/>
            <person name="Antoniw J."/>
            <person name="Baker S.E."/>
            <person name="Bluhm B.H."/>
            <person name="Breakspear A."/>
            <person name="Brown D.W."/>
            <person name="Butchko R.A.E."/>
            <person name="Chapman S."/>
            <person name="Coulson R."/>
            <person name="Coutinho P.M."/>
            <person name="Danchin E.G.J."/>
            <person name="Diener A."/>
            <person name="Gale L.R."/>
            <person name="Gardiner D.M."/>
            <person name="Goff S."/>
            <person name="Hammond-Kosack K.E."/>
            <person name="Hilburn K."/>
            <person name="Hua-Van A."/>
            <person name="Jonkers W."/>
            <person name="Kazan K."/>
            <person name="Kodira C.D."/>
            <person name="Koehrsen M."/>
            <person name="Kumar L."/>
            <person name="Lee Y.-H."/>
            <person name="Li L."/>
            <person name="Manners J.M."/>
            <person name="Miranda-Saavedra D."/>
            <person name="Mukherjee M."/>
            <person name="Park G."/>
            <person name="Park J."/>
            <person name="Park S.-Y."/>
            <person name="Proctor R.H."/>
            <person name="Regev A."/>
            <person name="Ruiz-Roldan M.C."/>
            <person name="Sain D."/>
            <person name="Sakthikumar S."/>
            <person name="Sykes S."/>
            <person name="Schwartz D.C."/>
            <person name="Turgeon B.G."/>
            <person name="Wapinski I."/>
            <person name="Yoder O."/>
            <person name="Young S."/>
            <person name="Zeng Q."/>
            <person name="Zhou S."/>
            <person name="Galagan J."/>
            <person name="Cuomo C.A."/>
            <person name="Kistler H.C."/>
            <person name="Rep M."/>
        </authorList>
    </citation>
    <scope>GENOME REANNOTATION</scope>
    <source>
        <strain>ATCC MYA-4620 / CBS 123657 / FGSC 9075 / NRRL 31084 / PH-1</strain>
    </source>
</reference>
<reference key="3">
    <citation type="journal article" date="2015" name="BMC Genomics">
        <title>The completed genome sequence of the pathogenic ascomycete fungus Fusarium graminearum.</title>
        <authorList>
            <person name="King R."/>
            <person name="Urban M."/>
            <person name="Hammond-Kosack M.C.U."/>
            <person name="Hassani-Pak K."/>
            <person name="Hammond-Kosack K.E."/>
        </authorList>
    </citation>
    <scope>NUCLEOTIDE SEQUENCE [LARGE SCALE GENOMIC DNA]</scope>
    <source>
        <strain>ATCC MYA-4620 / CBS 123657 / FGSC 9075 / NRRL 31084 / PH-1</strain>
    </source>
</reference>
<organism>
    <name type="scientific">Gibberella zeae (strain ATCC MYA-4620 / CBS 123657 / FGSC 9075 / NRRL 31084 / PH-1)</name>
    <name type="common">Wheat head blight fungus</name>
    <name type="synonym">Fusarium graminearum</name>
    <dbReference type="NCBI Taxonomy" id="229533"/>
    <lineage>
        <taxon>Eukaryota</taxon>
        <taxon>Fungi</taxon>
        <taxon>Dikarya</taxon>
        <taxon>Ascomycota</taxon>
        <taxon>Pezizomycotina</taxon>
        <taxon>Sordariomycetes</taxon>
        <taxon>Hypocreomycetidae</taxon>
        <taxon>Hypocreales</taxon>
        <taxon>Nectriaceae</taxon>
        <taxon>Fusarium</taxon>
    </lineage>
</organism>
<proteinExistence type="inferred from homology"/>
<protein>
    <recommendedName>
        <fullName>Mitochondrial import inner membrane translocase subunit TIM14</fullName>
    </recommendedName>
    <alternativeName>
        <fullName>Presequence translocated-associated motor subunit PAM18</fullName>
    </alternativeName>
</protein>
<evidence type="ECO:0000250" key="1"/>
<evidence type="ECO:0000255" key="2"/>
<evidence type="ECO:0000305" key="3"/>
<keyword id="KW-0143">Chaperone</keyword>
<keyword id="KW-0472">Membrane</keyword>
<keyword id="KW-0496">Mitochondrion</keyword>
<keyword id="KW-0999">Mitochondrion inner membrane</keyword>
<keyword id="KW-0653">Protein transport</keyword>
<keyword id="KW-1185">Reference proteome</keyword>
<keyword id="KW-0811">Translocation</keyword>
<keyword id="KW-0812">Transmembrane</keyword>
<keyword id="KW-1133">Transmembrane helix</keyword>
<keyword id="KW-0813">Transport</keyword>
<gene>
    <name type="primary">PAM18</name>
    <name type="synonym">TIM14</name>
    <name type="ORF">FGRRES_06723</name>
    <name type="ORF">FGSG_06723</name>
</gene>
<comment type="function">
    <text evidence="1">Essential component of the PAM complex, a complex required for the translocation of transit peptide-containing proteins from the inner membrane into the mitochondrial matrix in an ATP-dependent manner. In the complex, it is required to stimulate activity of mtHSP70 (SSC1) (By similarity).</text>
</comment>
<comment type="subunit">
    <text evidence="1">Heterodimer with PAM16. Component of the PAM complex, at least composed of mtHsp70, MGE1, TIM44, PAM16, PAM17 and PAM18 (By similarity).</text>
</comment>
<comment type="subcellular location">
    <subcellularLocation>
        <location evidence="1">Mitochondrion inner membrane</location>
        <topology evidence="1">Single-pass membrane protein</topology>
    </subcellularLocation>
</comment>
<comment type="domain">
    <text evidence="1">The J domain is essential for co-chaperone activity and mediates the heterodimerization with the J-like domain of PAM16.</text>
</comment>
<comment type="similarity">
    <text evidence="3">Belongs to the TIM14 family.</text>
</comment>